<keyword id="KW-0961">Cell wall biogenesis/degradation</keyword>
<keyword id="KW-0963">Cytoplasm</keyword>
<keyword id="KW-0596">Phosphopantetheine</keyword>
<keyword id="KW-0597">Phosphoprotein</keyword>
<keyword id="KW-1185">Reference proteome</keyword>
<accession>Q49W73</accession>
<organism>
    <name type="scientific">Staphylococcus saprophyticus subsp. saprophyticus (strain ATCC 15305 / DSM 20229 / NCIMB 8711 / NCTC 7292 / S-41)</name>
    <dbReference type="NCBI Taxonomy" id="342451"/>
    <lineage>
        <taxon>Bacteria</taxon>
        <taxon>Bacillati</taxon>
        <taxon>Bacillota</taxon>
        <taxon>Bacilli</taxon>
        <taxon>Bacillales</taxon>
        <taxon>Staphylococcaceae</taxon>
        <taxon>Staphylococcus</taxon>
    </lineage>
</organism>
<reference key="1">
    <citation type="journal article" date="2005" name="Proc. Natl. Acad. Sci. U.S.A.">
        <title>Whole genome sequence of Staphylococcus saprophyticus reveals the pathogenesis of uncomplicated urinary tract infection.</title>
        <authorList>
            <person name="Kuroda M."/>
            <person name="Yamashita A."/>
            <person name="Hirakawa H."/>
            <person name="Kumano M."/>
            <person name="Morikawa K."/>
            <person name="Higashide M."/>
            <person name="Maruyama A."/>
            <person name="Inose Y."/>
            <person name="Matoba K."/>
            <person name="Toh H."/>
            <person name="Kuhara S."/>
            <person name="Hattori M."/>
            <person name="Ohta T."/>
        </authorList>
    </citation>
    <scope>NUCLEOTIDE SEQUENCE [LARGE SCALE GENOMIC DNA]</scope>
    <source>
        <strain>ATCC 15305 / DSM 20229 / NCIMB 8711 / NCTC 7292 / S-41</strain>
    </source>
</reference>
<proteinExistence type="inferred from homology"/>
<gene>
    <name evidence="1" type="primary">dltC</name>
    <name type="ordered locus">SSP1841</name>
</gene>
<feature type="chain" id="PRO_0000213107" description="D-alanyl carrier protein">
    <location>
        <begin position="1"/>
        <end position="78"/>
    </location>
</feature>
<feature type="domain" description="Carrier" evidence="1">
    <location>
        <begin position="1"/>
        <end position="78"/>
    </location>
</feature>
<feature type="modified residue" description="O-(pantetheine 4'-phosphoryl)serine" evidence="1">
    <location>
        <position position="36"/>
    </location>
</feature>
<name>DLTC_STAS1</name>
<evidence type="ECO:0000255" key="1">
    <source>
        <dbReference type="HAMAP-Rule" id="MF_00565"/>
    </source>
</evidence>
<comment type="function">
    <text evidence="1">Carrier protein involved in the D-alanylation of lipoteichoic acid (LTA). The loading of thioester-linked D-alanine onto DltC is catalyzed by D-alanine--D-alanyl carrier protein ligase DltA. The DltC-carried D-alanyl group is further transferred to cell membrane phosphatidylglycerol (PG) by forming an ester bond, probably catalyzed by DltD. D-alanylation of LTA plays an important role in modulating the properties of the cell wall in Gram-positive bacteria, influencing the net charge of the cell wall.</text>
</comment>
<comment type="pathway">
    <text evidence="1">Cell wall biogenesis; lipoteichoic acid biosynthesis.</text>
</comment>
<comment type="subcellular location">
    <subcellularLocation>
        <location evidence="1">Cytoplasm</location>
    </subcellularLocation>
</comment>
<comment type="PTM">
    <text evidence="1">4'-phosphopantetheine is transferred from CoA to a specific serine of apo-DCP.</text>
</comment>
<comment type="similarity">
    <text evidence="1">Belongs to the DltC family.</text>
</comment>
<protein>
    <recommendedName>
        <fullName evidence="1">D-alanyl carrier protein</fullName>
        <shortName evidence="1">DCP</shortName>
    </recommendedName>
    <alternativeName>
        <fullName evidence="1">D-alanine--poly(phosphoribitol) ligase subunit 2</fullName>
    </alternativeName>
</protein>
<sequence length="78" mass="9036">MEFRDQVLDLLTEVAETNVIKENPDVELFEEGIIDSFQTVGLLLEIQNKLDIEVSIMDFDRDEWATPNKIVAVLEELR</sequence>
<dbReference type="EMBL" id="AP008934">
    <property type="protein sequence ID" value="BAE18986.1"/>
    <property type="molecule type" value="Genomic_DNA"/>
</dbReference>
<dbReference type="RefSeq" id="WP_002483818.1">
    <property type="nucleotide sequence ID" value="NZ_MTGA01000039.1"/>
</dbReference>
<dbReference type="SMR" id="Q49W73"/>
<dbReference type="GeneID" id="66868015"/>
<dbReference type="KEGG" id="ssp:SSP1841"/>
<dbReference type="eggNOG" id="COG0236">
    <property type="taxonomic scope" value="Bacteria"/>
</dbReference>
<dbReference type="HOGENOM" id="CLU_108696_19_0_9"/>
<dbReference type="OrthoDB" id="6462171at2"/>
<dbReference type="UniPathway" id="UPA00556"/>
<dbReference type="Proteomes" id="UP000006371">
    <property type="component" value="Chromosome"/>
</dbReference>
<dbReference type="GO" id="GO:0005737">
    <property type="term" value="C:cytoplasm"/>
    <property type="evidence" value="ECO:0007669"/>
    <property type="project" value="UniProtKB-SubCell"/>
</dbReference>
<dbReference type="GO" id="GO:0036370">
    <property type="term" value="F:D-alanyl carrier activity"/>
    <property type="evidence" value="ECO:0007669"/>
    <property type="project" value="UniProtKB-UniRule"/>
</dbReference>
<dbReference type="GO" id="GO:0071555">
    <property type="term" value="P:cell wall organization"/>
    <property type="evidence" value="ECO:0007669"/>
    <property type="project" value="UniProtKB-KW"/>
</dbReference>
<dbReference type="GO" id="GO:0070395">
    <property type="term" value="P:lipoteichoic acid biosynthetic process"/>
    <property type="evidence" value="ECO:0007669"/>
    <property type="project" value="UniProtKB-UniRule"/>
</dbReference>
<dbReference type="Gene3D" id="1.10.1200.10">
    <property type="entry name" value="ACP-like"/>
    <property type="match status" value="1"/>
</dbReference>
<dbReference type="HAMAP" id="MF_00565">
    <property type="entry name" value="DltC"/>
    <property type="match status" value="1"/>
</dbReference>
<dbReference type="InterPro" id="IPR036736">
    <property type="entry name" value="ACP-like_sf"/>
</dbReference>
<dbReference type="InterPro" id="IPR003230">
    <property type="entry name" value="DltC"/>
</dbReference>
<dbReference type="InterPro" id="IPR009081">
    <property type="entry name" value="PP-bd_ACP"/>
</dbReference>
<dbReference type="NCBIfam" id="TIGR01688">
    <property type="entry name" value="dltC"/>
    <property type="match status" value="1"/>
</dbReference>
<dbReference type="NCBIfam" id="NF003464">
    <property type="entry name" value="PRK05087.1"/>
    <property type="match status" value="1"/>
</dbReference>
<dbReference type="Pfam" id="PF00550">
    <property type="entry name" value="PP-binding"/>
    <property type="match status" value="1"/>
</dbReference>
<dbReference type="SUPFAM" id="SSF47336">
    <property type="entry name" value="ACP-like"/>
    <property type="match status" value="1"/>
</dbReference>
<dbReference type="PROSITE" id="PS50075">
    <property type="entry name" value="CARRIER"/>
    <property type="match status" value="1"/>
</dbReference>